<protein>
    <recommendedName>
        <fullName evidence="10">ATPase histone chaperone abo1</fullName>
        <ecNumber evidence="5">3.6.1.-</ecNumber>
    </recommendedName>
    <alternativeName>
        <fullName evidence="9">ATPase family AAA domain-containing protein abo1</fullName>
        <shortName evidence="9">AAA-ATPase</shortName>
    </alternativeName>
</protein>
<gene>
    <name evidence="8" type="primary">abo1</name>
    <name evidence="10" type="ORF">SPAC31G5.19</name>
</gene>
<reference key="1">
    <citation type="journal article" date="2002" name="Nature">
        <title>The genome sequence of Schizosaccharomyces pombe.</title>
        <authorList>
            <person name="Wood V."/>
            <person name="Gwilliam R."/>
            <person name="Rajandream M.A."/>
            <person name="Lyne M.H."/>
            <person name="Lyne R."/>
            <person name="Stewart A."/>
            <person name="Sgouros J.G."/>
            <person name="Peat N."/>
            <person name="Hayles J."/>
            <person name="Baker S.G."/>
            <person name="Basham D."/>
            <person name="Bowman S."/>
            <person name="Brooks K."/>
            <person name="Brown D."/>
            <person name="Brown S."/>
            <person name="Chillingworth T."/>
            <person name="Churcher C.M."/>
            <person name="Collins M."/>
            <person name="Connor R."/>
            <person name="Cronin A."/>
            <person name="Davis P."/>
            <person name="Feltwell T."/>
            <person name="Fraser A."/>
            <person name="Gentles S."/>
            <person name="Goble A."/>
            <person name="Hamlin N."/>
            <person name="Harris D.E."/>
            <person name="Hidalgo J."/>
            <person name="Hodgson G."/>
            <person name="Holroyd S."/>
            <person name="Hornsby T."/>
            <person name="Howarth S."/>
            <person name="Huckle E.J."/>
            <person name="Hunt S."/>
            <person name="Jagels K."/>
            <person name="James K.D."/>
            <person name="Jones L."/>
            <person name="Jones M."/>
            <person name="Leather S."/>
            <person name="McDonald S."/>
            <person name="McLean J."/>
            <person name="Mooney P."/>
            <person name="Moule S."/>
            <person name="Mungall K.L."/>
            <person name="Murphy L.D."/>
            <person name="Niblett D."/>
            <person name="Odell C."/>
            <person name="Oliver K."/>
            <person name="O'Neil S."/>
            <person name="Pearson D."/>
            <person name="Quail M.A."/>
            <person name="Rabbinowitsch E."/>
            <person name="Rutherford K.M."/>
            <person name="Rutter S."/>
            <person name="Saunders D."/>
            <person name="Seeger K."/>
            <person name="Sharp S."/>
            <person name="Skelton J."/>
            <person name="Simmonds M.N."/>
            <person name="Squares R."/>
            <person name="Squares S."/>
            <person name="Stevens K."/>
            <person name="Taylor K."/>
            <person name="Taylor R.G."/>
            <person name="Tivey A."/>
            <person name="Walsh S.V."/>
            <person name="Warren T."/>
            <person name="Whitehead S."/>
            <person name="Woodward J.R."/>
            <person name="Volckaert G."/>
            <person name="Aert R."/>
            <person name="Robben J."/>
            <person name="Grymonprez B."/>
            <person name="Weltjens I."/>
            <person name="Vanstreels E."/>
            <person name="Rieger M."/>
            <person name="Schaefer M."/>
            <person name="Mueller-Auer S."/>
            <person name="Gabel C."/>
            <person name="Fuchs M."/>
            <person name="Duesterhoeft A."/>
            <person name="Fritzc C."/>
            <person name="Holzer E."/>
            <person name="Moestl D."/>
            <person name="Hilbert H."/>
            <person name="Borzym K."/>
            <person name="Langer I."/>
            <person name="Beck A."/>
            <person name="Lehrach H."/>
            <person name="Reinhardt R."/>
            <person name="Pohl T.M."/>
            <person name="Eger P."/>
            <person name="Zimmermann W."/>
            <person name="Wedler H."/>
            <person name="Wambutt R."/>
            <person name="Purnelle B."/>
            <person name="Goffeau A."/>
            <person name="Cadieu E."/>
            <person name="Dreano S."/>
            <person name="Gloux S."/>
            <person name="Lelaure V."/>
            <person name="Mottier S."/>
            <person name="Galibert F."/>
            <person name="Aves S.J."/>
            <person name="Xiang Z."/>
            <person name="Hunt C."/>
            <person name="Moore K."/>
            <person name="Hurst S.M."/>
            <person name="Lucas M."/>
            <person name="Rochet M."/>
            <person name="Gaillardin C."/>
            <person name="Tallada V.A."/>
            <person name="Garzon A."/>
            <person name="Thode G."/>
            <person name="Daga R.R."/>
            <person name="Cruzado L."/>
            <person name="Jimenez J."/>
            <person name="Sanchez M."/>
            <person name="del Rey F."/>
            <person name="Benito J."/>
            <person name="Dominguez A."/>
            <person name="Revuelta J.L."/>
            <person name="Moreno S."/>
            <person name="Armstrong J."/>
            <person name="Forsburg S.L."/>
            <person name="Cerutti L."/>
            <person name="Lowe T."/>
            <person name="McCombie W.R."/>
            <person name="Paulsen I."/>
            <person name="Potashkin J."/>
            <person name="Shpakovski G.V."/>
            <person name="Ussery D."/>
            <person name="Barrell B.G."/>
            <person name="Nurse P."/>
        </authorList>
    </citation>
    <scope>NUCLEOTIDE SEQUENCE [LARGE SCALE GENOMIC DNA]</scope>
    <source>
        <strain>972 / ATCC 24843</strain>
    </source>
</reference>
<reference key="2">
    <citation type="journal article" date="2006" name="Nat. Biotechnol.">
        <title>ORFeome cloning and global analysis of protein localization in the fission yeast Schizosaccharomyces pombe.</title>
        <authorList>
            <person name="Matsuyama A."/>
            <person name="Arai R."/>
            <person name="Yashiroda Y."/>
            <person name="Shirai A."/>
            <person name="Kamata A."/>
            <person name="Sekido S."/>
            <person name="Kobayashi Y."/>
            <person name="Hashimoto A."/>
            <person name="Hamamoto M."/>
            <person name="Hiraoka Y."/>
            <person name="Horinouchi S."/>
            <person name="Yoshida M."/>
        </authorList>
    </citation>
    <scope>SUBCELLULAR LOCATION [LARGE SCALE ANALYSIS]</scope>
</reference>
<reference key="3">
    <citation type="journal article" date="2016" name="EMBO Rep.">
        <title>Abo1, a conserved bromodomain AAA-ATPase, maintains global nucleosome occupancy and organisation.</title>
        <authorList>
            <person name="Gal C."/>
            <person name="Murton H.E."/>
            <person name="Subramanian L."/>
            <person name="Whale A.J."/>
            <person name="Moore K.M."/>
            <person name="Paszkiewicz K."/>
            <person name="Codlin S."/>
            <person name="Baehler J."/>
            <person name="Creamer K.M."/>
            <person name="Partridge J.F."/>
            <person name="Allshire R.C."/>
            <person name="Kent N.A."/>
            <person name="Whitehall S.K."/>
        </authorList>
    </citation>
    <scope>FUNCTION</scope>
    <scope>INTERACTION WITH SPT16; POB3 AND HISTONE H3</scope>
    <scope>SUBCELLULAR LOCATION</scope>
    <scope>DISRUPTION PHENOTYPE</scope>
</reference>
<reference key="4">
    <citation type="journal article" date="2020" name="Sci. Rep.">
        <title>Abo1 is required for the H3K9me2 to H3K9me3 transition in heterochromatin.</title>
        <authorList>
            <person name="Dong W."/>
            <person name="Oya E."/>
            <person name="Zahedi Y."/>
            <person name="Prasad P."/>
            <person name="Svensson J.P."/>
            <person name="Lennartsson A."/>
            <person name="Ekwall K."/>
            <person name="Durand-Dubief M."/>
        </authorList>
    </citation>
    <scope>FUNCTION</scope>
    <scope>DISRUPTION PHENOTYPE</scope>
</reference>
<reference key="5">
    <citation type="journal article" date="2021" name="Mol. Cells">
        <title>Single-Molecule Imaging Reveals the Mechanism Underlying Histone Loading of Schizosaccharomyces pombe AAA+ ATPase Abo1.</title>
        <authorList>
            <person name="Kang Y."/>
            <person name="Cho C."/>
            <person name="Lee K.S."/>
            <person name="Song J.J."/>
            <person name="Lee J.Y."/>
        </authorList>
    </citation>
    <scope>FUNCTION</scope>
</reference>
<reference evidence="11 12 13" key="6">
    <citation type="journal article" date="2019" name="Nat. Commun.">
        <title>Structural basis of nucleosome assembly by the Abo1 AAA+ ATPase histone chaperone.</title>
        <authorList>
            <person name="Cho C."/>
            <person name="Jang J."/>
            <person name="Kang Y."/>
            <person name="Watanabe H."/>
            <person name="Uchihashi T."/>
            <person name="Kim S.J."/>
            <person name="Kato K."/>
            <person name="Lee J.Y."/>
            <person name="Song J.J."/>
        </authorList>
    </citation>
    <scope>STRUCTURE BY ELECTRON MICROSCOPY (3.54 ANGSTROMS) OF MUTANT GLN-372 IN COMPLEX WITH ATP</scope>
    <scope>FUNCTION</scope>
    <scope>CATALYTIC ACTIVITY</scope>
    <scope>SUBUNIT</scope>
    <scope>INTERACTION WITH HISTONES H3-H4</scope>
    <scope>MUTAGENESIS OF TRP-345; GLU-372; GLU-385 AND GLU-900</scope>
</reference>
<evidence type="ECO:0000255" key="1">
    <source>
        <dbReference type="PROSITE-ProRule" id="PRU00035"/>
    </source>
</evidence>
<evidence type="ECO:0000256" key="2">
    <source>
        <dbReference type="SAM" id="MobiDB-lite"/>
    </source>
</evidence>
<evidence type="ECO:0000269" key="3">
    <source>
    </source>
</evidence>
<evidence type="ECO:0000269" key="4">
    <source>
    </source>
</evidence>
<evidence type="ECO:0000269" key="5">
    <source>
    </source>
</evidence>
<evidence type="ECO:0000269" key="6">
    <source>
    </source>
</evidence>
<evidence type="ECO:0000269" key="7">
    <source>
    </source>
</evidence>
<evidence type="ECO:0000303" key="8">
    <source>
    </source>
</evidence>
<evidence type="ECO:0000305" key="9"/>
<evidence type="ECO:0000312" key="10">
    <source>
        <dbReference type="PomBase" id="SPAC31G5.19"/>
    </source>
</evidence>
<evidence type="ECO:0007744" key="11">
    <source>
        <dbReference type="PDB" id="6JPQ"/>
    </source>
</evidence>
<evidence type="ECO:0007744" key="12">
    <source>
        <dbReference type="PDB" id="6JPU"/>
    </source>
</evidence>
<evidence type="ECO:0007744" key="13">
    <source>
        <dbReference type="PDB" id="6JQ0"/>
    </source>
</evidence>
<proteinExistence type="evidence at protein level"/>
<comment type="function">
    <text evidence="4 5 6 7">ATPase histone chaperone which facilitates loading of histone H3-H4 onto DNA in an ATP-dependent manner (PubMed:31848341, PubMed:33658433). Plays a genome-wide role in nucleosome organization and establishment of chromatin (PubMed:26582768, PubMed:31848341). Also plays a role in heterochromatin assembly by stabilizing recruitment of the histone methyltransferase clr4 to methylated histone H3, to promote the transition from H3K9me2 to H3K9me3 (PubMed:32269268).</text>
</comment>
<comment type="catalytic activity">
    <reaction evidence="5">
        <text>ATP + H2O = ADP + phosphate + H(+)</text>
        <dbReference type="Rhea" id="RHEA:13065"/>
        <dbReference type="ChEBI" id="CHEBI:15377"/>
        <dbReference type="ChEBI" id="CHEBI:15378"/>
        <dbReference type="ChEBI" id="CHEBI:30616"/>
        <dbReference type="ChEBI" id="CHEBI:43474"/>
        <dbReference type="ChEBI" id="CHEBI:456216"/>
    </reaction>
    <physiologicalReaction direction="left-to-right" evidence="5">
        <dbReference type="Rhea" id="RHEA:13066"/>
    </physiologicalReaction>
</comment>
<comment type="subunit">
    <text evidence="4 5">Homohexamer (PubMed:31848341). Interacts with the FACT complex subunits spt16 and pob3 (PubMed:26582768). Interacts with histone H3-H4 (via N-terminus) (PubMed:26582768, PubMed:31848341).</text>
</comment>
<comment type="subcellular location">
    <subcellularLocation>
        <location evidence="3 4">Nucleus</location>
    </subcellularLocation>
    <subcellularLocation>
        <location evidence="4">Chromosome</location>
    </subcellularLocation>
</comment>
<comment type="disruption phenotype">
    <text evidence="4 6">Abnormal nucleosome distribution (PubMed:26582768). Decreases level of clr4 at the subtelomeric and pericentromeric regions and at DSR (determinant of selective removal) islands containing meiotic genes; decreases di- and tri-methylation of histone H3 'Lys-9' at these regions (PubMed:32269268). Abnormal heterochromatin formation at the pericentromeric outer and inner repeat regions, the subtelomeric region, and the silenced mating-type locus (PubMed:26582768, PubMed:32269268). Impairs centromere function; leads to abnormal mitotic and meiotic chromosome segregation and sensitivity to thiabendazole (spindle poison) (PubMed:26582768). Decreases silencing of subtelomeric regions, including Tf2-type retrotransposons (PubMed:26582768, PubMed:32269268). Decreases histone H3 and H2A protein levels (PubMed:26582768). Abnormal transcription resulting in increased levels of cryptic transcripts (PubMed:26582768). Increases transcript levels of genes involved in the stress response (PubMed:26582768). Sensitive to methyl methanesulfonate (DNA damaging agent); double-knockout with nhp6, or triple-knockout with hht2 and hhf2 exacerbates the effect (PubMed:26582768). Sensitive to heat and cold; double-knockout with nhp6, clr3, clr4, or swi6, or triple-knockout with hht2 and hhf2 exacerbates the effect (PubMed:26582768, PubMed:32269268). Decreases cell viability and leads to slow cell population growth with elongated cells; double-knockout with clr4 or swi6 exacerbates the effect (PubMed:26582768, PubMed:32269268). Double knockout with abo2 results in lethality (PubMed:26582768).</text>
</comment>
<comment type="similarity">
    <text evidence="9">Belongs to the AAA ATPase family.</text>
</comment>
<accession>O14114</accession>
<keyword id="KW-0002">3D-structure</keyword>
<keyword id="KW-0067">ATP-binding</keyword>
<keyword id="KW-0103">Bromodomain</keyword>
<keyword id="KW-0143">Chaperone</keyword>
<keyword id="KW-0158">Chromosome</keyword>
<keyword id="KW-0378">Hydrolase</keyword>
<keyword id="KW-0547">Nucleotide-binding</keyword>
<keyword id="KW-0539">Nucleus</keyword>
<keyword id="KW-1185">Reference proteome</keyword>
<name>ATD2_SCHPO</name>
<feature type="chain" id="PRO_0000310281" description="ATPase histone chaperone abo1">
    <location>
        <begin position="1"/>
        <end position="1190"/>
    </location>
</feature>
<feature type="domain" description="Bromo" evidence="1">
    <location>
        <begin position="794"/>
        <end position="922"/>
    </location>
</feature>
<feature type="region of interest" description="Disordered" evidence="2">
    <location>
        <begin position="1"/>
        <end position="185"/>
    </location>
</feature>
<feature type="region of interest" description="Disordered" evidence="2">
    <location>
        <begin position="204"/>
        <end position="253"/>
    </location>
</feature>
<feature type="compositionally biased region" description="Basic and acidic residues" evidence="2">
    <location>
        <begin position="1"/>
        <end position="11"/>
    </location>
</feature>
<feature type="compositionally biased region" description="Acidic residues" evidence="2">
    <location>
        <begin position="52"/>
        <end position="62"/>
    </location>
</feature>
<feature type="compositionally biased region" description="Acidic residues" evidence="2">
    <location>
        <begin position="82"/>
        <end position="106"/>
    </location>
</feature>
<feature type="compositionally biased region" description="Basic residues" evidence="2">
    <location>
        <begin position="112"/>
        <end position="131"/>
    </location>
</feature>
<feature type="compositionally biased region" description="Basic and acidic residues" evidence="2">
    <location>
        <begin position="141"/>
        <end position="152"/>
    </location>
</feature>
<feature type="binding site" evidence="5 13">
    <location>
        <begin position="309"/>
        <end position="314"/>
    </location>
    <ligand>
        <name>ATP</name>
        <dbReference type="ChEBI" id="CHEBI:30616"/>
        <note>ligand shared between two neighboring subunits</note>
    </ligand>
</feature>
<feature type="mutagenesis site" description="Severely impairs histone deposition activity." evidence="5">
    <original>W</original>
    <variation>A</variation>
    <location>
        <position position="345"/>
    </location>
</feature>
<feature type="mutagenesis site" description="Severely decreases ATPase activity and impairs histone deposition activity." evidence="5">
    <original>E</original>
    <variation>Q</variation>
    <location>
        <position position="372"/>
    </location>
</feature>
<feature type="mutagenesis site" description="Severely impairs histone deposition activity." evidence="5">
    <original>E</original>
    <variation>A</variation>
    <location>
        <position position="385"/>
    </location>
</feature>
<feature type="mutagenesis site" description="Severely impairs histone deposition activity." evidence="5">
    <original>E</original>
    <variation>A</variation>
    <location>
        <position position="900"/>
    </location>
</feature>
<organism>
    <name type="scientific">Schizosaccharomyces pombe (strain 972 / ATCC 24843)</name>
    <name type="common">Fission yeast</name>
    <dbReference type="NCBI Taxonomy" id="284812"/>
    <lineage>
        <taxon>Eukaryota</taxon>
        <taxon>Fungi</taxon>
        <taxon>Dikarya</taxon>
        <taxon>Ascomycota</taxon>
        <taxon>Taphrinomycotina</taxon>
        <taxon>Schizosaccharomycetes</taxon>
        <taxon>Schizosaccharomycetales</taxon>
        <taxon>Schizosaccharomycetaceae</taxon>
        <taxon>Schizosaccharomyces</taxon>
    </lineage>
</organism>
<sequence>MKEEASEHGGSADETQELSPVSDSSDEMPNNAKRRRRSQSMIANKRIHQAFQEDEGDEDWEEEEHKPKAKRRYNTRSNESFSEGDDEPFEVSESSALEDELSDSEDSFIRSVRSKPKYKPGTRRSTRLRNRRSQDEEESEEEHRPILRERTSRINYSVPLAFPPVDEMDGDPSSQVNQSRSRKTHSELAITKLLRQQVSSFMPYIDSSGSESESDNTRIKKSSAKTIKALTDPANSGGPPDFGRIREKSDLADSDPLGVDSSLSFESVGGLDNYINQLKEMVMLPLLYPEIFQRFNMQPPRGVLFHGPPGTGKTLMARALAAACSSENKKVSFYMRKGADCLSKWVGEAERQLRLLFEEAKSTQPSIIFFDEIDGLAPVRSSKQEQIHASIVSTLLALMDGMESRGQVIIIGATNRPDAVDPALRRPGRFDREFYFPLPDRDARKKIIEIHTRNWDPPVPEWLCSMLAEKSKGYGGADLRALCTEAALNSIKRTYPQLYRSTKRLQIDPKTIKVKVKDFVMSMKRMIPSSERSSISPSKPLSPELKPLLNEAFQDIEKTLQKLMPVASKLNPLEEVMYDDPKENDFEYQQRLETFETLRIYKPRFLICGRKGLGQTALGPAILQQYEGVHVQSFDMSTLLQDSTQSIETSIIHLFLEVRRHTPSIIYIPDIDNWLNVLPLTAITTFSSMLERLDFSDQILFLALSSSPLSELHPQLREWFSSKQSVYSLQYPTRDSIIAFFQPILELIKASPTELPGGIPRKRRVLPELPLAPDPPPFTSQKITLKQTKQADMRLLNKLKIKLNALLGSLRARYRKFKKPLIDFNDIYCVDPETGHSYRSREECHYEFVDDVVKQIGSDQKFSMMSLEEIEKRTWDNCYCTPKQFVHDIKLILRDALQLEDSETIKRAQEMYANVLLGVEDMEDDQFSQRCERMALREAERRKLRHGKLQKHLDETKADMQFTSEKPSVDESITEVDDAIKDGPPVLAETLTNSLMEDVGPENVDMDIEDNEIFTNQSTMSVPSMLVENEESPKPDEYIDQKDKVQSPLLNGKSPVGVPSEAALRVSTDVSTNISSNGRADIPVDTLITSPADVPNNAPTDAHNITSADGHIENIEQEVVFPDLVFDEDRLTPLKQLLIDSTTGFTVDQLLHLHSFLYQIIWNTKSEWNRNSVVDECERAVKEFMINALQ</sequence>
<dbReference type="EC" id="3.6.1.-" evidence="5"/>
<dbReference type="EMBL" id="CU329670">
    <property type="protein sequence ID" value="CAB11703.1"/>
    <property type="molecule type" value="Genomic_DNA"/>
</dbReference>
<dbReference type="PIR" id="T38636">
    <property type="entry name" value="T38636"/>
</dbReference>
<dbReference type="RefSeq" id="NP_594020.1">
    <property type="nucleotide sequence ID" value="NM_001019446.2"/>
</dbReference>
<dbReference type="PDB" id="6JPQ">
    <property type="method" value="EM"/>
    <property type="resolution" value="4.44 A"/>
    <property type="chains" value="A/B/C/D/E/F=1-1190"/>
</dbReference>
<dbReference type="PDB" id="6JPU">
    <property type="method" value="EM"/>
    <property type="resolution" value="4.27 A"/>
    <property type="chains" value="A/B/C/D/E/F=1-1190"/>
</dbReference>
<dbReference type="PDB" id="6JQ0">
    <property type="method" value="EM"/>
    <property type="resolution" value="3.54 A"/>
    <property type="chains" value="A/B/C/D/E/F=1-1190"/>
</dbReference>
<dbReference type="PDBsum" id="6JPQ"/>
<dbReference type="PDBsum" id="6JPU"/>
<dbReference type="PDBsum" id="6JQ0"/>
<dbReference type="EMDB" id="EMD-9870"/>
<dbReference type="EMDB" id="EMD-9871"/>
<dbReference type="SMR" id="O14114"/>
<dbReference type="BioGRID" id="279517">
    <property type="interactions" value="48"/>
</dbReference>
<dbReference type="FunCoup" id="O14114">
    <property type="interactions" value="673"/>
</dbReference>
<dbReference type="STRING" id="284812.O14114"/>
<dbReference type="iPTMnet" id="O14114"/>
<dbReference type="PaxDb" id="4896-SPAC31G5.19.1"/>
<dbReference type="EnsemblFungi" id="SPAC31G5.19.1">
    <property type="protein sequence ID" value="SPAC31G5.19.1:pep"/>
    <property type="gene ID" value="SPAC31G5.19"/>
</dbReference>
<dbReference type="PomBase" id="SPAC31G5.19">
    <property type="gene designation" value="abo1"/>
</dbReference>
<dbReference type="VEuPathDB" id="FungiDB:SPAC31G5.19"/>
<dbReference type="eggNOG" id="KOG0732">
    <property type="taxonomic scope" value="Eukaryota"/>
</dbReference>
<dbReference type="HOGENOM" id="CLU_000536_6_3_1"/>
<dbReference type="InParanoid" id="O14114"/>
<dbReference type="OMA" id="KRAQEMY"/>
<dbReference type="PhylomeDB" id="O14114"/>
<dbReference type="PRO" id="PR:O14114"/>
<dbReference type="Proteomes" id="UP000002485">
    <property type="component" value="Chromosome I"/>
</dbReference>
<dbReference type="GO" id="GO:0000785">
    <property type="term" value="C:chromatin"/>
    <property type="evidence" value="ECO:0000314"/>
    <property type="project" value="PomBase"/>
</dbReference>
<dbReference type="GO" id="GO:0005634">
    <property type="term" value="C:nucleus"/>
    <property type="evidence" value="ECO:0007005"/>
    <property type="project" value="PomBase"/>
</dbReference>
<dbReference type="GO" id="GO:0005524">
    <property type="term" value="F:ATP binding"/>
    <property type="evidence" value="ECO:0000255"/>
    <property type="project" value="PomBase"/>
</dbReference>
<dbReference type="GO" id="GO:0016887">
    <property type="term" value="F:ATP hydrolysis activity"/>
    <property type="evidence" value="ECO:0000314"/>
    <property type="project" value="UniProtKB"/>
</dbReference>
<dbReference type="GO" id="GO:0140665">
    <property type="term" value="F:ATP-dependent H3-H4 histone complex chaperone activity"/>
    <property type="evidence" value="ECO:0000314"/>
    <property type="project" value="UniProtKB"/>
</dbReference>
<dbReference type="GO" id="GO:0003682">
    <property type="term" value="F:chromatin binding"/>
    <property type="evidence" value="ECO:0000318"/>
    <property type="project" value="GO_Central"/>
</dbReference>
<dbReference type="GO" id="GO:0042393">
    <property type="term" value="F:histone binding"/>
    <property type="evidence" value="ECO:0000314"/>
    <property type="project" value="PomBase"/>
</dbReference>
<dbReference type="GO" id="GO:0006334">
    <property type="term" value="P:nucleosome assembly"/>
    <property type="evidence" value="ECO:0000314"/>
    <property type="project" value="UniProtKB"/>
</dbReference>
<dbReference type="GO" id="GO:0006337">
    <property type="term" value="P:nucleosome disassembly"/>
    <property type="evidence" value="ECO:0000318"/>
    <property type="project" value="GO_Central"/>
</dbReference>
<dbReference type="GO" id="GO:0045815">
    <property type="term" value="P:transcription initiation-coupled chromatin remodeling"/>
    <property type="evidence" value="ECO:0000269"/>
    <property type="project" value="PomBase"/>
</dbReference>
<dbReference type="CDD" id="cd05491">
    <property type="entry name" value="Bromo_TBP7_like"/>
    <property type="match status" value="1"/>
</dbReference>
<dbReference type="CDD" id="cd19517">
    <property type="entry name" value="RecA-like_Yta7-like"/>
    <property type="match status" value="1"/>
</dbReference>
<dbReference type="FunFam" id="3.40.50.300:FF:001218">
    <property type="entry name" value="AAA family ATPase, putative"/>
    <property type="match status" value="1"/>
</dbReference>
<dbReference type="FunFam" id="1.10.8.60:FF:000016">
    <property type="entry name" value="ATPase family AAA domain-containing protein 2B"/>
    <property type="match status" value="1"/>
</dbReference>
<dbReference type="FunFam" id="3.40.50.300:FF:000061">
    <property type="entry name" value="ATPase family, AAA domain-containing 2"/>
    <property type="match status" value="1"/>
</dbReference>
<dbReference type="Gene3D" id="1.10.8.60">
    <property type="match status" value="1"/>
</dbReference>
<dbReference type="Gene3D" id="1.20.920.10">
    <property type="entry name" value="Bromodomain-like"/>
    <property type="match status" value="1"/>
</dbReference>
<dbReference type="Gene3D" id="3.40.50.300">
    <property type="entry name" value="P-loop containing nucleotide triphosphate hydrolases"/>
    <property type="match status" value="2"/>
</dbReference>
<dbReference type="InterPro" id="IPR003593">
    <property type="entry name" value="AAA+_ATPase"/>
</dbReference>
<dbReference type="InterPro" id="IPR041569">
    <property type="entry name" value="AAA_lid_3"/>
</dbReference>
<dbReference type="InterPro" id="IPR045199">
    <property type="entry name" value="ATAD2-like"/>
</dbReference>
<dbReference type="InterPro" id="IPR003959">
    <property type="entry name" value="ATPase_AAA_core"/>
</dbReference>
<dbReference type="InterPro" id="IPR003960">
    <property type="entry name" value="ATPase_AAA_CS"/>
</dbReference>
<dbReference type="InterPro" id="IPR036427">
    <property type="entry name" value="Bromodomain-like_sf"/>
</dbReference>
<dbReference type="InterPro" id="IPR027417">
    <property type="entry name" value="P-loop_NTPase"/>
</dbReference>
<dbReference type="PANTHER" id="PTHR23069">
    <property type="entry name" value="AAA DOMAIN-CONTAINING"/>
    <property type="match status" value="1"/>
</dbReference>
<dbReference type="PANTHER" id="PTHR23069:SF10">
    <property type="entry name" value="ATPASE HISTONE CHAPERONE ABO1"/>
    <property type="match status" value="1"/>
</dbReference>
<dbReference type="Pfam" id="PF00004">
    <property type="entry name" value="AAA"/>
    <property type="match status" value="2"/>
</dbReference>
<dbReference type="Pfam" id="PF17862">
    <property type="entry name" value="AAA_lid_3"/>
    <property type="match status" value="1"/>
</dbReference>
<dbReference type="SMART" id="SM00382">
    <property type="entry name" value="AAA"/>
    <property type="match status" value="2"/>
</dbReference>
<dbReference type="SUPFAM" id="SSF47370">
    <property type="entry name" value="Bromodomain"/>
    <property type="match status" value="1"/>
</dbReference>
<dbReference type="SUPFAM" id="SSF52540">
    <property type="entry name" value="P-loop containing nucleoside triphosphate hydrolases"/>
    <property type="match status" value="2"/>
</dbReference>
<dbReference type="PROSITE" id="PS00674">
    <property type="entry name" value="AAA"/>
    <property type="match status" value="1"/>
</dbReference>
<dbReference type="PROSITE" id="PS50014">
    <property type="entry name" value="BROMODOMAIN_2"/>
    <property type="match status" value="1"/>
</dbReference>